<name>ZN790_HUMAN</name>
<comment type="function">
    <text>May be involved in transcriptional regulation.</text>
</comment>
<comment type="subcellular location">
    <subcellularLocation>
        <location evidence="4">Nucleus</location>
    </subcellularLocation>
</comment>
<comment type="similarity">
    <text evidence="4">Belongs to the krueppel C2H2-type zinc-finger protein family.</text>
</comment>
<keyword id="KW-0238">DNA-binding</keyword>
<keyword id="KW-0479">Metal-binding</keyword>
<keyword id="KW-0539">Nucleus</keyword>
<keyword id="KW-1267">Proteomics identification</keyword>
<keyword id="KW-1185">Reference proteome</keyword>
<keyword id="KW-0677">Repeat</keyword>
<keyword id="KW-0804">Transcription</keyword>
<keyword id="KW-0805">Transcription regulation</keyword>
<keyword id="KW-0862">Zinc</keyword>
<keyword id="KW-0863">Zinc-finger</keyword>
<gene>
    <name type="primary">ZNF790</name>
</gene>
<evidence type="ECO:0000255" key="1">
    <source>
        <dbReference type="PROSITE-ProRule" id="PRU00042"/>
    </source>
</evidence>
<evidence type="ECO:0000255" key="2">
    <source>
        <dbReference type="PROSITE-ProRule" id="PRU00119"/>
    </source>
</evidence>
<evidence type="ECO:0000269" key="3">
    <source>
    </source>
</evidence>
<evidence type="ECO:0000305" key="4"/>
<accession>Q6PG37</accession>
<dbReference type="EMBL" id="AC020928">
    <property type="status" value="NOT_ANNOTATED_CDS"/>
    <property type="molecule type" value="Genomic_DNA"/>
</dbReference>
<dbReference type="EMBL" id="BC057245">
    <property type="protein sequence ID" value="AAH57245.1"/>
    <property type="molecule type" value="mRNA"/>
</dbReference>
<dbReference type="CCDS" id="CCDS12496.1"/>
<dbReference type="RefSeq" id="NP_001229729.1">
    <property type="nucleotide sequence ID" value="NM_001242800.2"/>
</dbReference>
<dbReference type="RefSeq" id="NP_001229730.1">
    <property type="nucleotide sequence ID" value="NM_001242801.2"/>
</dbReference>
<dbReference type="RefSeq" id="NP_001229731.1">
    <property type="nucleotide sequence ID" value="NM_001242802.2"/>
</dbReference>
<dbReference type="RefSeq" id="NP_996777.2">
    <property type="nucleotide sequence ID" value="NM_206894.4"/>
</dbReference>
<dbReference type="RefSeq" id="XP_005258960.1">
    <property type="nucleotide sequence ID" value="XM_005258903.6"/>
</dbReference>
<dbReference type="RefSeq" id="XP_011525252.1">
    <property type="nucleotide sequence ID" value="XM_011526950.4"/>
</dbReference>
<dbReference type="RefSeq" id="XP_047294755.1">
    <property type="nucleotide sequence ID" value="XM_047438799.1"/>
</dbReference>
<dbReference type="RefSeq" id="XP_047294756.1">
    <property type="nucleotide sequence ID" value="XM_047438800.1"/>
</dbReference>
<dbReference type="RefSeq" id="XP_047294757.1">
    <property type="nucleotide sequence ID" value="XM_047438801.1"/>
</dbReference>
<dbReference type="RefSeq" id="XP_054176929.1">
    <property type="nucleotide sequence ID" value="XM_054320954.1"/>
</dbReference>
<dbReference type="RefSeq" id="XP_054176930.1">
    <property type="nucleotide sequence ID" value="XM_054320955.1"/>
</dbReference>
<dbReference type="RefSeq" id="XP_054176931.1">
    <property type="nucleotide sequence ID" value="XM_054320956.1"/>
</dbReference>
<dbReference type="RefSeq" id="XP_054176932.1">
    <property type="nucleotide sequence ID" value="XM_054320957.1"/>
</dbReference>
<dbReference type="RefSeq" id="XP_054176933.1">
    <property type="nucleotide sequence ID" value="XM_054320958.1"/>
</dbReference>
<dbReference type="SMR" id="Q6PG37"/>
<dbReference type="BioGRID" id="132730">
    <property type="interactions" value="4"/>
</dbReference>
<dbReference type="FunCoup" id="Q6PG37">
    <property type="interactions" value="16"/>
</dbReference>
<dbReference type="IntAct" id="Q6PG37">
    <property type="interactions" value="4"/>
</dbReference>
<dbReference type="STRING" id="9606.ENSP00000349161"/>
<dbReference type="iPTMnet" id="Q6PG37"/>
<dbReference type="PhosphoSitePlus" id="Q6PG37"/>
<dbReference type="BioMuta" id="ZNF790"/>
<dbReference type="DMDM" id="296453059"/>
<dbReference type="jPOST" id="Q6PG37"/>
<dbReference type="MassIVE" id="Q6PG37"/>
<dbReference type="PaxDb" id="9606-ENSP00000349161"/>
<dbReference type="PeptideAtlas" id="Q6PG37"/>
<dbReference type="ProteomicsDB" id="67112"/>
<dbReference type="Antibodypedia" id="44747">
    <property type="antibodies" value="23 antibodies from 11 providers"/>
</dbReference>
<dbReference type="DNASU" id="388536"/>
<dbReference type="Ensembl" id="ENST00000356725.9">
    <property type="protein sequence ID" value="ENSP00000349161.3"/>
    <property type="gene ID" value="ENSG00000197863.9"/>
</dbReference>
<dbReference type="Ensembl" id="ENST00000613249.4">
    <property type="protein sequence ID" value="ENSP00000480764.1"/>
    <property type="gene ID" value="ENSG00000197863.9"/>
</dbReference>
<dbReference type="Ensembl" id="ENST00000614179.4">
    <property type="protein sequence ID" value="ENSP00000480834.1"/>
    <property type="gene ID" value="ENSG00000197863.9"/>
</dbReference>
<dbReference type="Ensembl" id="ENST00000615484.4">
    <property type="protein sequence ID" value="ENSP00000478852.1"/>
    <property type="gene ID" value="ENSG00000197863.9"/>
</dbReference>
<dbReference type="GeneID" id="388536"/>
<dbReference type="KEGG" id="hsa:388536"/>
<dbReference type="MANE-Select" id="ENST00000356725.9">
    <property type="protein sequence ID" value="ENSP00000349161.3"/>
    <property type="RefSeq nucleotide sequence ID" value="NM_206894.4"/>
    <property type="RefSeq protein sequence ID" value="NP_996777.2"/>
</dbReference>
<dbReference type="UCSC" id="uc002oew.4">
    <property type="organism name" value="human"/>
</dbReference>
<dbReference type="AGR" id="HGNC:33114"/>
<dbReference type="CTD" id="388536"/>
<dbReference type="GeneCards" id="ZNF790"/>
<dbReference type="HGNC" id="HGNC:33114">
    <property type="gene designation" value="ZNF790"/>
</dbReference>
<dbReference type="HPA" id="ENSG00000197863">
    <property type="expression patterns" value="Low tissue specificity"/>
</dbReference>
<dbReference type="neXtProt" id="NX_Q6PG37"/>
<dbReference type="OpenTargets" id="ENSG00000197863"/>
<dbReference type="PharmGKB" id="PA162410507"/>
<dbReference type="VEuPathDB" id="HostDB:ENSG00000197863"/>
<dbReference type="eggNOG" id="KOG1721">
    <property type="taxonomic scope" value="Eukaryota"/>
</dbReference>
<dbReference type="GeneTree" id="ENSGT00940000163643"/>
<dbReference type="HOGENOM" id="CLU_002678_0_9_1"/>
<dbReference type="InParanoid" id="Q6PG37"/>
<dbReference type="OMA" id="QDSDFAQ"/>
<dbReference type="OrthoDB" id="6354171at2759"/>
<dbReference type="PAN-GO" id="Q6PG37">
    <property type="GO annotations" value="4 GO annotations based on evolutionary models"/>
</dbReference>
<dbReference type="PhylomeDB" id="Q6PG37"/>
<dbReference type="TreeFam" id="TF341817"/>
<dbReference type="PathwayCommons" id="Q6PG37"/>
<dbReference type="Reactome" id="R-HSA-212436">
    <property type="pathway name" value="Generic Transcription Pathway"/>
</dbReference>
<dbReference type="SignaLink" id="Q6PG37"/>
<dbReference type="BioGRID-ORCS" id="388536">
    <property type="hits" value="16 hits in 1168 CRISPR screens"/>
</dbReference>
<dbReference type="ChiTaRS" id="ZNF790">
    <property type="organism name" value="human"/>
</dbReference>
<dbReference type="GenomeRNAi" id="388536"/>
<dbReference type="Pharos" id="Q6PG37">
    <property type="development level" value="Tdark"/>
</dbReference>
<dbReference type="PRO" id="PR:Q6PG37"/>
<dbReference type="Proteomes" id="UP000005640">
    <property type="component" value="Chromosome 19"/>
</dbReference>
<dbReference type="RNAct" id="Q6PG37">
    <property type="molecule type" value="protein"/>
</dbReference>
<dbReference type="Bgee" id="ENSG00000197863">
    <property type="expression patterns" value="Expressed in quadriceps femoris and 107 other cell types or tissues"/>
</dbReference>
<dbReference type="ExpressionAtlas" id="Q6PG37">
    <property type="expression patterns" value="baseline and differential"/>
</dbReference>
<dbReference type="GO" id="GO:0005634">
    <property type="term" value="C:nucleus"/>
    <property type="evidence" value="ECO:0000318"/>
    <property type="project" value="GO_Central"/>
</dbReference>
<dbReference type="GO" id="GO:0000981">
    <property type="term" value="F:DNA-binding transcription factor activity, RNA polymerase II-specific"/>
    <property type="evidence" value="ECO:0000318"/>
    <property type="project" value="GO_Central"/>
</dbReference>
<dbReference type="GO" id="GO:0000978">
    <property type="term" value="F:RNA polymerase II cis-regulatory region sequence-specific DNA binding"/>
    <property type="evidence" value="ECO:0000318"/>
    <property type="project" value="GO_Central"/>
</dbReference>
<dbReference type="GO" id="GO:0008270">
    <property type="term" value="F:zinc ion binding"/>
    <property type="evidence" value="ECO:0007669"/>
    <property type="project" value="UniProtKB-KW"/>
</dbReference>
<dbReference type="GO" id="GO:0006357">
    <property type="term" value="P:regulation of transcription by RNA polymerase II"/>
    <property type="evidence" value="ECO:0000318"/>
    <property type="project" value="GO_Central"/>
</dbReference>
<dbReference type="CDD" id="cd07765">
    <property type="entry name" value="KRAB_A-box"/>
    <property type="match status" value="1"/>
</dbReference>
<dbReference type="FunFam" id="3.30.160.60:FF:004135">
    <property type="match status" value="1"/>
</dbReference>
<dbReference type="FunFam" id="3.30.160.60:FF:000020">
    <property type="entry name" value="Zinc finger protein 14 homolog"/>
    <property type="match status" value="1"/>
</dbReference>
<dbReference type="FunFam" id="3.30.160.60:FF:000800">
    <property type="entry name" value="zinc finger protein 181 isoform X2"/>
    <property type="match status" value="1"/>
</dbReference>
<dbReference type="FunFam" id="3.30.160.60:FF:000358">
    <property type="entry name" value="zinc finger protein 24"/>
    <property type="match status" value="1"/>
</dbReference>
<dbReference type="FunFam" id="3.30.160.60:FF:000338">
    <property type="entry name" value="zinc finger protein 383"/>
    <property type="match status" value="1"/>
</dbReference>
<dbReference type="FunFam" id="3.30.160.60:FF:002090">
    <property type="entry name" value="Zinc finger protein 473"/>
    <property type="match status" value="1"/>
</dbReference>
<dbReference type="FunFam" id="3.30.160.60:FF:002254">
    <property type="entry name" value="Zinc finger protein 540"/>
    <property type="match status" value="2"/>
</dbReference>
<dbReference type="FunFam" id="3.30.160.60:FF:000052">
    <property type="entry name" value="zinc finger protein 546 isoform X1"/>
    <property type="match status" value="1"/>
</dbReference>
<dbReference type="FunFam" id="3.30.160.60:FF:000737">
    <property type="entry name" value="Zinc finger protein 565"/>
    <property type="match status" value="1"/>
</dbReference>
<dbReference type="FunFam" id="3.30.160.60:FF:002204">
    <property type="entry name" value="Zinc finger protein 790"/>
    <property type="match status" value="1"/>
</dbReference>
<dbReference type="FunFam" id="3.30.160.60:FF:002703">
    <property type="entry name" value="Zinc finger protein 790"/>
    <property type="match status" value="1"/>
</dbReference>
<dbReference type="FunFam" id="3.30.160.60:FF:003134">
    <property type="entry name" value="Zinc finger protein 790"/>
    <property type="match status" value="1"/>
</dbReference>
<dbReference type="Gene3D" id="6.10.140.140">
    <property type="match status" value="1"/>
</dbReference>
<dbReference type="Gene3D" id="3.30.160.60">
    <property type="entry name" value="Classic Zinc Finger"/>
    <property type="match status" value="13"/>
</dbReference>
<dbReference type="InterPro" id="IPR001909">
    <property type="entry name" value="KRAB"/>
</dbReference>
<dbReference type="InterPro" id="IPR036051">
    <property type="entry name" value="KRAB_dom_sf"/>
</dbReference>
<dbReference type="InterPro" id="IPR036236">
    <property type="entry name" value="Znf_C2H2_sf"/>
</dbReference>
<dbReference type="InterPro" id="IPR013087">
    <property type="entry name" value="Znf_C2H2_type"/>
</dbReference>
<dbReference type="PANTHER" id="PTHR24381">
    <property type="entry name" value="ZINC FINGER PROTEIN"/>
    <property type="match status" value="1"/>
</dbReference>
<dbReference type="PANTHER" id="PTHR24381:SF462">
    <property type="entry name" value="ZINC FINGER PROTEIN 566"/>
    <property type="match status" value="1"/>
</dbReference>
<dbReference type="Pfam" id="PF01352">
    <property type="entry name" value="KRAB"/>
    <property type="match status" value="1"/>
</dbReference>
<dbReference type="Pfam" id="PF00096">
    <property type="entry name" value="zf-C2H2"/>
    <property type="match status" value="11"/>
</dbReference>
<dbReference type="SMART" id="SM00349">
    <property type="entry name" value="KRAB"/>
    <property type="match status" value="1"/>
</dbReference>
<dbReference type="SMART" id="SM00355">
    <property type="entry name" value="ZnF_C2H2"/>
    <property type="match status" value="12"/>
</dbReference>
<dbReference type="SUPFAM" id="SSF57667">
    <property type="entry name" value="beta-beta-alpha zinc fingers"/>
    <property type="match status" value="9"/>
</dbReference>
<dbReference type="SUPFAM" id="SSF109640">
    <property type="entry name" value="KRAB domain (Kruppel-associated box)"/>
    <property type="match status" value="1"/>
</dbReference>
<dbReference type="PROSITE" id="PS50805">
    <property type="entry name" value="KRAB"/>
    <property type="match status" value="1"/>
</dbReference>
<dbReference type="PROSITE" id="PS00028">
    <property type="entry name" value="ZINC_FINGER_C2H2_1"/>
    <property type="match status" value="12"/>
</dbReference>
<dbReference type="PROSITE" id="PS50157">
    <property type="entry name" value="ZINC_FINGER_C2H2_2"/>
    <property type="match status" value="13"/>
</dbReference>
<feature type="chain" id="PRO_0000261336" description="Zinc finger protein 790">
    <location>
        <begin position="1"/>
        <end position="636"/>
    </location>
</feature>
<feature type="domain" description="KRAB" evidence="2">
    <location>
        <begin position="5"/>
        <end position="76"/>
    </location>
</feature>
<feature type="zinc finger region" description="C2H2-type 1; degenerate" evidence="1">
    <location>
        <begin position="196"/>
        <end position="220"/>
    </location>
</feature>
<feature type="zinc finger region" description="C2H2-type 2" evidence="1">
    <location>
        <begin position="226"/>
        <end position="248"/>
    </location>
</feature>
<feature type="zinc finger region" description="C2H2-type 3" evidence="1">
    <location>
        <begin position="254"/>
        <end position="276"/>
    </location>
</feature>
<feature type="zinc finger region" description="C2H2-type 4" evidence="1">
    <location>
        <begin position="282"/>
        <end position="304"/>
    </location>
</feature>
<feature type="zinc finger region" description="C2H2-type 5" evidence="1">
    <location>
        <begin position="310"/>
        <end position="332"/>
    </location>
</feature>
<feature type="zinc finger region" description="C2H2-type 6" evidence="1">
    <location>
        <begin position="338"/>
        <end position="360"/>
    </location>
</feature>
<feature type="zinc finger region" description="C2H2-type 7" evidence="1">
    <location>
        <begin position="366"/>
        <end position="388"/>
    </location>
</feature>
<feature type="zinc finger region" description="C2H2-type 8" evidence="1">
    <location>
        <begin position="394"/>
        <end position="416"/>
    </location>
</feature>
<feature type="zinc finger region" description="C2H2-type 9" evidence="1">
    <location>
        <begin position="422"/>
        <end position="444"/>
    </location>
</feature>
<feature type="zinc finger region" description="C2H2-type 10" evidence="1">
    <location>
        <begin position="450"/>
        <end position="472"/>
    </location>
</feature>
<feature type="zinc finger region" description="C2H2-type 11" evidence="1">
    <location>
        <begin position="478"/>
        <end position="500"/>
    </location>
</feature>
<feature type="zinc finger region" description="C2H2-type 12" evidence="1">
    <location>
        <begin position="506"/>
        <end position="528"/>
    </location>
</feature>
<feature type="zinc finger region" description="C2H2-type 13" evidence="1">
    <location>
        <begin position="534"/>
        <end position="556"/>
    </location>
</feature>
<feature type="sequence variant" id="VAR_060434" description="In dbSNP:rs3745775." evidence="3">
    <original>Q</original>
    <variation>R</variation>
    <location>
        <position position="301"/>
    </location>
</feature>
<feature type="sequence variant" id="VAR_057453" description="In dbSNP:rs4369791.">
    <original>T</original>
    <variation>S</variation>
    <location>
        <position position="486"/>
    </location>
</feature>
<proteinExistence type="evidence at protein level"/>
<reference key="1">
    <citation type="journal article" date="2004" name="Nature">
        <title>The DNA sequence and biology of human chromosome 19.</title>
        <authorList>
            <person name="Grimwood J."/>
            <person name="Gordon L.A."/>
            <person name="Olsen A.S."/>
            <person name="Terry A."/>
            <person name="Schmutz J."/>
            <person name="Lamerdin J.E."/>
            <person name="Hellsten U."/>
            <person name="Goodstein D."/>
            <person name="Couronne O."/>
            <person name="Tran-Gyamfi M."/>
            <person name="Aerts A."/>
            <person name="Altherr M."/>
            <person name="Ashworth L."/>
            <person name="Bajorek E."/>
            <person name="Black S."/>
            <person name="Branscomb E."/>
            <person name="Caenepeel S."/>
            <person name="Carrano A.V."/>
            <person name="Caoile C."/>
            <person name="Chan Y.M."/>
            <person name="Christensen M."/>
            <person name="Cleland C.A."/>
            <person name="Copeland A."/>
            <person name="Dalin E."/>
            <person name="Dehal P."/>
            <person name="Denys M."/>
            <person name="Detter J.C."/>
            <person name="Escobar J."/>
            <person name="Flowers D."/>
            <person name="Fotopulos D."/>
            <person name="Garcia C."/>
            <person name="Georgescu A.M."/>
            <person name="Glavina T."/>
            <person name="Gomez M."/>
            <person name="Gonzales E."/>
            <person name="Groza M."/>
            <person name="Hammon N."/>
            <person name="Hawkins T."/>
            <person name="Haydu L."/>
            <person name="Ho I."/>
            <person name="Huang W."/>
            <person name="Israni S."/>
            <person name="Jett J."/>
            <person name="Kadner K."/>
            <person name="Kimball H."/>
            <person name="Kobayashi A."/>
            <person name="Larionov V."/>
            <person name="Leem S.-H."/>
            <person name="Lopez F."/>
            <person name="Lou Y."/>
            <person name="Lowry S."/>
            <person name="Malfatti S."/>
            <person name="Martinez D."/>
            <person name="McCready P.M."/>
            <person name="Medina C."/>
            <person name="Morgan J."/>
            <person name="Nelson K."/>
            <person name="Nolan M."/>
            <person name="Ovcharenko I."/>
            <person name="Pitluck S."/>
            <person name="Pollard M."/>
            <person name="Popkie A.P."/>
            <person name="Predki P."/>
            <person name="Quan G."/>
            <person name="Ramirez L."/>
            <person name="Rash S."/>
            <person name="Retterer J."/>
            <person name="Rodriguez A."/>
            <person name="Rogers S."/>
            <person name="Salamov A."/>
            <person name="Salazar A."/>
            <person name="She X."/>
            <person name="Smith D."/>
            <person name="Slezak T."/>
            <person name="Solovyev V."/>
            <person name="Thayer N."/>
            <person name="Tice H."/>
            <person name="Tsai M."/>
            <person name="Ustaszewska A."/>
            <person name="Vo N."/>
            <person name="Wagner M."/>
            <person name="Wheeler J."/>
            <person name="Wu K."/>
            <person name="Xie G."/>
            <person name="Yang J."/>
            <person name="Dubchak I."/>
            <person name="Furey T.S."/>
            <person name="DeJong P."/>
            <person name="Dickson M."/>
            <person name="Gordon D."/>
            <person name="Eichler E.E."/>
            <person name="Pennacchio L.A."/>
            <person name="Richardson P."/>
            <person name="Stubbs L."/>
            <person name="Rokhsar D.S."/>
            <person name="Myers R.M."/>
            <person name="Rubin E.M."/>
            <person name="Lucas S.M."/>
        </authorList>
    </citation>
    <scope>NUCLEOTIDE SEQUENCE [LARGE SCALE GENOMIC DNA]</scope>
</reference>
<reference key="2">
    <citation type="journal article" date="2004" name="Genome Res.">
        <title>The status, quality, and expansion of the NIH full-length cDNA project: the Mammalian Gene Collection (MGC).</title>
        <authorList>
            <consortium name="The MGC Project Team"/>
        </authorList>
    </citation>
    <scope>NUCLEOTIDE SEQUENCE [LARGE SCALE MRNA]</scope>
    <scope>VARIANT ARG-301</scope>
</reference>
<organism>
    <name type="scientific">Homo sapiens</name>
    <name type="common">Human</name>
    <dbReference type="NCBI Taxonomy" id="9606"/>
    <lineage>
        <taxon>Eukaryota</taxon>
        <taxon>Metazoa</taxon>
        <taxon>Chordata</taxon>
        <taxon>Craniata</taxon>
        <taxon>Vertebrata</taxon>
        <taxon>Euteleostomi</taxon>
        <taxon>Mammalia</taxon>
        <taxon>Eutheria</taxon>
        <taxon>Euarchontoglires</taxon>
        <taxon>Primates</taxon>
        <taxon>Haplorrhini</taxon>
        <taxon>Catarrhini</taxon>
        <taxon>Hominidae</taxon>
        <taxon>Homo</taxon>
    </lineage>
</organism>
<sequence>MAHLMMFRDVAVDFSQEEWECLDLEQRDLYRDVMLENYSNMVSLGFCIYQPEAFSLLEKGKEPWKILRDETRGPCPDMQSRCQTKKLLPKNGIFEREIAQLEIMRICKNHSLDCLCFRGDWEGNTQFQTLQDNQEECFKQVIRTCEKRPTFNQHTVFNLHQRLNTGDKLNEFKELGKAFISGSDHTQHQLIHTSEKFCGDKECGNTFLPDSEVIQYQTVHTVKKTYECKECGKSFSLRSSLTGHKRIHTGEKPFKCKDCGKAFRFHSQLSVHKRIHTGEKSYECKECGKAFSCGSDLTRHQRIHTGEKPYECNECRKAFSQRSHLIKHQRIHTGEKPYECKECGKAFTRGSHLTQHQRIHTGEKSHECKECGKAFIRGSNLAQHQNVHVGRKPYKCEKCGKAYIWSSHLARHQRIHTGRKPYECKQCGKTFTWASYLAQHEKIHNERKSYECKECGKTFLHGSEFNRHQKIHTGERNYECKECGKTFFRGSELNRHQKIHTGKRPYECEECGKAFLWGSQLTRHQRMHTGEEPYVCKECGKSFIWGSQLTRHKKIHTDAEPYGCKKSSHIFSHHSYFTEQKIHNSANLCEWTDYGNTFSHESNFAQHQNIYTFEKSYEFKDFEKAFSSSSHFISLL</sequence>
<protein>
    <recommendedName>
        <fullName>Zinc finger protein 790</fullName>
    </recommendedName>
</protein>